<evidence type="ECO:0000250" key="1"/>
<evidence type="ECO:0000256" key="2">
    <source>
        <dbReference type="SAM" id="MobiDB-lite"/>
    </source>
</evidence>
<evidence type="ECO:0000305" key="3"/>
<accession>P14985</accession>
<dbReference type="EMBL" id="M20021">
    <property type="protein sequence ID" value="AAA67098.1"/>
    <property type="molecule type" value="Genomic_DNA"/>
</dbReference>
<dbReference type="PIR" id="JU0042">
    <property type="entry name" value="JU0042"/>
</dbReference>
<dbReference type="RefSeq" id="NP_040952.1">
    <property type="nucleotide sequence ID" value="NC_001466.1"/>
</dbReference>
<dbReference type="SMR" id="P14985"/>
<dbReference type="KEGG" id="vg:2545254"/>
<dbReference type="OrthoDB" id="17486at10239"/>
<dbReference type="Proteomes" id="UP000203767">
    <property type="component" value="Genome"/>
</dbReference>
<dbReference type="GO" id="GO:0043657">
    <property type="term" value="C:host cell"/>
    <property type="evidence" value="ECO:0007669"/>
    <property type="project" value="GOC"/>
</dbReference>
<dbReference type="GO" id="GO:0042025">
    <property type="term" value="C:host cell nucleus"/>
    <property type="evidence" value="ECO:0007669"/>
    <property type="project" value="UniProtKB-SubCell"/>
</dbReference>
<dbReference type="GO" id="GO:0039615">
    <property type="term" value="C:T=1 icosahedral viral capsid"/>
    <property type="evidence" value="ECO:0007669"/>
    <property type="project" value="UniProtKB-KW"/>
</dbReference>
<dbReference type="GO" id="GO:0003677">
    <property type="term" value="F:DNA binding"/>
    <property type="evidence" value="ECO:0007669"/>
    <property type="project" value="UniProtKB-KW"/>
</dbReference>
<dbReference type="GO" id="GO:0005198">
    <property type="term" value="F:structural molecule activity"/>
    <property type="evidence" value="ECO:0007669"/>
    <property type="project" value="InterPro"/>
</dbReference>
<dbReference type="GO" id="GO:0046718">
    <property type="term" value="P:symbiont entry into host cell"/>
    <property type="evidence" value="ECO:0007669"/>
    <property type="project" value="UniProtKB-KW"/>
</dbReference>
<dbReference type="GO" id="GO:0075732">
    <property type="term" value="P:viral penetration into host nucleus"/>
    <property type="evidence" value="ECO:0007669"/>
    <property type="project" value="UniProtKB-KW"/>
</dbReference>
<dbReference type="Gene3D" id="2.60.120.20">
    <property type="match status" value="1"/>
</dbReference>
<dbReference type="InterPro" id="IPR000143">
    <property type="entry name" value="Gemcoat_MSV"/>
</dbReference>
<dbReference type="InterPro" id="IPR000263">
    <property type="entry name" value="GV_A/BR1_coat"/>
</dbReference>
<dbReference type="InterPro" id="IPR029053">
    <property type="entry name" value="Viral_coat"/>
</dbReference>
<dbReference type="Pfam" id="PF00844">
    <property type="entry name" value="Gemini_coat"/>
    <property type="match status" value="1"/>
</dbReference>
<dbReference type="PRINTS" id="PR00223">
    <property type="entry name" value="GEMCOATARBR1"/>
</dbReference>
<dbReference type="PRINTS" id="PR00226">
    <property type="entry name" value="GEMCOATMSV"/>
</dbReference>
<name>CAPSD_CSMV</name>
<keyword id="KW-0167">Capsid protein</keyword>
<keyword id="KW-0238">DNA-binding</keyword>
<keyword id="KW-1048">Host nucleus</keyword>
<keyword id="KW-1185">Reference proteome</keyword>
<keyword id="KW-1140">T=1 icosahedral capsid protein</keyword>
<keyword id="KW-1163">Viral penetration into host nucleus</keyword>
<keyword id="KW-0946">Virion</keyword>
<keyword id="KW-1160">Virus entry into host cell</keyword>
<organismHost>
    <name type="scientific">Avena sativa</name>
    <name type="common">Oat</name>
    <dbReference type="NCBI Taxonomy" id="4498"/>
</organismHost>
<organismHost>
    <name type="scientific">Chloris gayana</name>
    <dbReference type="NCBI Taxonomy" id="110876"/>
</organismHost>
<organismHost>
    <name type="scientific">Dactylis glomerata</name>
    <name type="common">Orchard grass</name>
    <name type="synonym">Cock's-foot grass</name>
    <dbReference type="NCBI Taxonomy" id="4509"/>
</organismHost>
<organismHost>
    <name type="scientific">Hordeum vulgare</name>
    <name type="common">Barley</name>
    <dbReference type="NCBI Taxonomy" id="4513"/>
</organismHost>
<organismHost>
    <name type="scientific">Ixophorus unisetus</name>
    <dbReference type="NCBI Taxonomy" id="279312"/>
</organismHost>
<organismHost>
    <name type="scientific">Triticum</name>
    <dbReference type="NCBI Taxonomy" id="4564"/>
</organismHost>
<organismHost>
    <name type="scientific">Zea mays</name>
    <name type="common">Maize</name>
    <dbReference type="NCBI Taxonomy" id="4577"/>
</organismHost>
<feature type="chain" id="PRO_0000222182" description="Capsid protein">
    <location>
        <begin position="1"/>
        <end position="241"/>
    </location>
</feature>
<feature type="region of interest" description="Disordered" evidence="2">
    <location>
        <begin position="1"/>
        <end position="30"/>
    </location>
</feature>
<feature type="short sequence motif" description="Bipartite nuclear localization signal" evidence="1">
    <location>
        <begin position="1"/>
        <end position="26"/>
    </location>
</feature>
<organism>
    <name type="scientific">Chloris striate mosaic virus</name>
    <name type="common">CSMV</name>
    <dbReference type="NCBI Taxonomy" id="10820"/>
    <lineage>
        <taxon>Viruses</taxon>
        <taxon>Monodnaviria</taxon>
        <taxon>Shotokuvirae</taxon>
        <taxon>Cressdnaviricota</taxon>
        <taxon>Repensiviricetes</taxon>
        <taxon>Geplafuvirales</taxon>
        <taxon>Geminiviridae</taxon>
        <taxon>Mastrevirus</taxon>
    </lineage>
</organism>
<protein>
    <recommendedName>
        <fullName>Capsid protein</fullName>
    </recommendedName>
    <alternativeName>
        <fullName>Coat protein</fullName>
        <shortName>CP</shortName>
    </alternativeName>
</protein>
<reference key="1">
    <citation type="journal article" date="1988" name="Virology">
        <title>Nucleotide sequence of the geminivirus chloris striate mosaic virus.</title>
        <authorList>
            <person name="Andersen M.T."/>
            <person name="Richardson K.A."/>
            <person name="Harbison S.A."/>
            <person name="Morris B.A.M."/>
        </authorList>
    </citation>
    <scope>NUCLEOTIDE SEQUENCE [GENOMIC DNA]</scope>
</reference>
<gene>
    <name type="ORF">V1</name>
</gene>
<proteinExistence type="inferred from homology"/>
<comment type="function">
    <text evidence="1">Encapsidates the viral genome into characteristic twinned ('geminate') particles. Binds the genomic viral ssDNA and shuttles it into and out of the cell nucleus. Plays a role in protection of the genome from degradation, virus acquisition and transmission by insect vectors, infectivity, and systemic movement. The CP of monopartite geminiviruses is absolutely essential for virus movement (By similarity).</text>
</comment>
<comment type="subunit">
    <text evidence="1">Homomultimer. Interacts with the movement protein. Binds to single-stranded and double-stranded viral DNA (By similarity).</text>
</comment>
<comment type="subcellular location">
    <subcellularLocation>
        <location evidence="1">Virion</location>
    </subcellularLocation>
    <subcellularLocation>
        <location evidence="1">Host nucleus</location>
    </subcellularLocation>
    <text evidence="1">It is actively transported into the host cell nucleus. It may be exported out of the nucleus through a nuclear export signal for cell-to-cell movement and spread (By similarity).</text>
</comment>
<comment type="similarity">
    <text evidence="3">Belongs to the geminiviridae capsid protein family.</text>
</comment>
<sequence length="241" mass="26762">MSPASSWKRKRPSSSSAQASKKRRVYRPAVSRSLARREPLQVQDFVWDTDVAFNRGGGCYLLTSYARGSAENQRKTAETITYKVAVNLGCAISGTMQQYCISSRPVCWIVYDAAPTGSAVTPKDIFGYPEGLVNWPTTWKVARAVSHRFIVKRRWVFTMESNGSRFDRDYTNLPAAIPQSLPVLNKFAKQLGVRTEWKNAEGGDFGDIKSGALYLVMAPANGAVFVARGNVRVYFKSVGNQ</sequence>